<keyword id="KW-0963">Cytoplasm</keyword>
<keyword id="KW-0269">Exonuclease</keyword>
<keyword id="KW-0378">Hydrolase</keyword>
<keyword id="KW-0540">Nuclease</keyword>
<keyword id="KW-1185">Reference proteome</keyword>
<organism>
    <name type="scientific">Ruegeria pomeroyi (strain ATCC 700808 / DSM 15171 / DSS-3)</name>
    <name type="common">Silicibacter pomeroyi</name>
    <dbReference type="NCBI Taxonomy" id="246200"/>
    <lineage>
        <taxon>Bacteria</taxon>
        <taxon>Pseudomonadati</taxon>
        <taxon>Pseudomonadota</taxon>
        <taxon>Alphaproteobacteria</taxon>
        <taxon>Rhodobacterales</taxon>
        <taxon>Roseobacteraceae</taxon>
        <taxon>Ruegeria</taxon>
    </lineage>
</organism>
<accession>Q5LX40</accession>
<gene>
    <name evidence="1" type="primary">xseB</name>
    <name type="ordered locus">SPO0249</name>
</gene>
<name>EX7S_RUEPO</name>
<feature type="chain" id="PRO_0000207002" description="Exodeoxyribonuclease 7 small subunit">
    <location>
        <begin position="1"/>
        <end position="72"/>
    </location>
</feature>
<comment type="function">
    <text evidence="1">Bidirectionally degrades single-stranded DNA into large acid-insoluble oligonucleotides, which are then degraded further into small acid-soluble oligonucleotides.</text>
</comment>
<comment type="catalytic activity">
    <reaction evidence="1">
        <text>Exonucleolytic cleavage in either 5'- to 3'- or 3'- to 5'-direction to yield nucleoside 5'-phosphates.</text>
        <dbReference type="EC" id="3.1.11.6"/>
    </reaction>
</comment>
<comment type="subunit">
    <text evidence="1">Heterooligomer composed of large and small subunits.</text>
</comment>
<comment type="subcellular location">
    <subcellularLocation>
        <location evidence="1">Cytoplasm</location>
    </subcellularLocation>
</comment>
<comment type="similarity">
    <text evidence="1">Belongs to the XseB family.</text>
</comment>
<dbReference type="EC" id="3.1.11.6" evidence="1"/>
<dbReference type="EMBL" id="CP000031">
    <property type="protein sequence ID" value="AAV93569.1"/>
    <property type="molecule type" value="Genomic_DNA"/>
</dbReference>
<dbReference type="SMR" id="Q5LX40"/>
<dbReference type="STRING" id="246200.SPO0249"/>
<dbReference type="PaxDb" id="246200-SPO0249"/>
<dbReference type="KEGG" id="sil:SPO0249"/>
<dbReference type="eggNOG" id="COG1722">
    <property type="taxonomic scope" value="Bacteria"/>
</dbReference>
<dbReference type="HOGENOM" id="CLU_145918_0_3_5"/>
<dbReference type="Proteomes" id="UP000001023">
    <property type="component" value="Chromosome"/>
</dbReference>
<dbReference type="GO" id="GO:0005829">
    <property type="term" value="C:cytosol"/>
    <property type="evidence" value="ECO:0007669"/>
    <property type="project" value="TreeGrafter"/>
</dbReference>
<dbReference type="GO" id="GO:0009318">
    <property type="term" value="C:exodeoxyribonuclease VII complex"/>
    <property type="evidence" value="ECO:0007669"/>
    <property type="project" value="InterPro"/>
</dbReference>
<dbReference type="GO" id="GO:0008855">
    <property type="term" value="F:exodeoxyribonuclease VII activity"/>
    <property type="evidence" value="ECO:0007669"/>
    <property type="project" value="UniProtKB-UniRule"/>
</dbReference>
<dbReference type="GO" id="GO:0006308">
    <property type="term" value="P:DNA catabolic process"/>
    <property type="evidence" value="ECO:0007669"/>
    <property type="project" value="UniProtKB-UniRule"/>
</dbReference>
<dbReference type="Gene3D" id="1.10.287.1040">
    <property type="entry name" value="Exonuclease VII, small subunit"/>
    <property type="match status" value="1"/>
</dbReference>
<dbReference type="HAMAP" id="MF_00337">
    <property type="entry name" value="Exonuc_7_S"/>
    <property type="match status" value="1"/>
</dbReference>
<dbReference type="InterPro" id="IPR003761">
    <property type="entry name" value="Exonuc_VII_S"/>
</dbReference>
<dbReference type="InterPro" id="IPR037004">
    <property type="entry name" value="Exonuc_VII_ssu_sf"/>
</dbReference>
<dbReference type="NCBIfam" id="NF002139">
    <property type="entry name" value="PRK00977.1-3"/>
    <property type="match status" value="1"/>
</dbReference>
<dbReference type="NCBIfam" id="TIGR01280">
    <property type="entry name" value="xseB"/>
    <property type="match status" value="1"/>
</dbReference>
<dbReference type="PANTHER" id="PTHR34137">
    <property type="entry name" value="EXODEOXYRIBONUCLEASE 7 SMALL SUBUNIT"/>
    <property type="match status" value="1"/>
</dbReference>
<dbReference type="PANTHER" id="PTHR34137:SF1">
    <property type="entry name" value="EXODEOXYRIBONUCLEASE 7 SMALL SUBUNIT"/>
    <property type="match status" value="1"/>
</dbReference>
<dbReference type="Pfam" id="PF02609">
    <property type="entry name" value="Exonuc_VII_S"/>
    <property type="match status" value="1"/>
</dbReference>
<dbReference type="PIRSF" id="PIRSF006488">
    <property type="entry name" value="Exonuc_VII_S"/>
    <property type="match status" value="1"/>
</dbReference>
<dbReference type="SUPFAM" id="SSF116842">
    <property type="entry name" value="XseB-like"/>
    <property type="match status" value="1"/>
</dbReference>
<sequence length="72" mass="7864">MSFEQAMKELETVVGQLERGDVALDQSIALYERGAALKKRCEDELKRAEEKVAAITLDSNGQPTGTKPVEGL</sequence>
<proteinExistence type="inferred from homology"/>
<evidence type="ECO:0000255" key="1">
    <source>
        <dbReference type="HAMAP-Rule" id="MF_00337"/>
    </source>
</evidence>
<reference key="1">
    <citation type="journal article" date="2004" name="Nature">
        <title>Genome sequence of Silicibacter pomeroyi reveals adaptations to the marine environment.</title>
        <authorList>
            <person name="Moran M.A."/>
            <person name="Buchan A."/>
            <person name="Gonzalez J.M."/>
            <person name="Heidelberg J.F."/>
            <person name="Whitman W.B."/>
            <person name="Kiene R.P."/>
            <person name="Henriksen J.R."/>
            <person name="King G.M."/>
            <person name="Belas R."/>
            <person name="Fuqua C."/>
            <person name="Brinkac L.M."/>
            <person name="Lewis M."/>
            <person name="Johri S."/>
            <person name="Weaver B."/>
            <person name="Pai G."/>
            <person name="Eisen J.A."/>
            <person name="Rahe E."/>
            <person name="Sheldon W.M."/>
            <person name="Ye W."/>
            <person name="Miller T.R."/>
            <person name="Carlton J."/>
            <person name="Rasko D.A."/>
            <person name="Paulsen I.T."/>
            <person name="Ren Q."/>
            <person name="Daugherty S.C."/>
            <person name="DeBoy R.T."/>
            <person name="Dodson R.J."/>
            <person name="Durkin A.S."/>
            <person name="Madupu R."/>
            <person name="Nelson W.C."/>
            <person name="Sullivan S.A."/>
            <person name="Rosovitz M.J."/>
            <person name="Haft D.H."/>
            <person name="Selengut J."/>
            <person name="Ward N."/>
        </authorList>
    </citation>
    <scope>NUCLEOTIDE SEQUENCE [LARGE SCALE GENOMIC DNA]</scope>
    <source>
        <strain>ATCC 700808 / DSM 15171 / DSS-3</strain>
    </source>
</reference>
<reference key="2">
    <citation type="journal article" date="2014" name="Stand. Genomic Sci.">
        <title>An updated genome annotation for the model marine bacterium Ruegeria pomeroyi DSS-3.</title>
        <authorList>
            <person name="Rivers A.R."/>
            <person name="Smith C.B."/>
            <person name="Moran M.A."/>
        </authorList>
    </citation>
    <scope>GENOME REANNOTATION</scope>
    <source>
        <strain>ATCC 700808 / DSM 15171 / DSS-3</strain>
    </source>
</reference>
<protein>
    <recommendedName>
        <fullName evidence="1">Exodeoxyribonuclease 7 small subunit</fullName>
        <ecNumber evidence="1">3.1.11.6</ecNumber>
    </recommendedName>
    <alternativeName>
        <fullName evidence="1">Exodeoxyribonuclease VII small subunit</fullName>
        <shortName evidence="1">Exonuclease VII small subunit</shortName>
    </alternativeName>
</protein>